<sequence length="715" mass="77434">MAWRRVLSQVARNRSAYAICNEIIYANPSRILRGDTIAGGTLRNLHERYQSSYVGSFARRMRQMDSPSEASLLKEIYRSDPERVIQIFESQPSLHSNPSALAEYVKALVRVDRLEDSTLLKTLQRGIAASAREEENLGSVSENLGSVSAFRSAGQVTKDGILGTANAPIHMVTAETGQFKEQLWRTFRSIALTFLLISGIGALIEDRGISKGLGLNEEVQPSMESNTKFSDVKGVDEAKAELEEIVHYLRDPKRFTRLGGKLPKGVLLVGPPGTGKTMLARAIAGEAGVPFFSCSGSEFEEMFVGVGARRVRDLFAAAKKRSPCIIFMDEIDAIGGSRNPKDQQYMKMTLNQLLVELDGFKQNEGIIVIAATNFPESLDKALVRPGRFDRHIVVPNPDVEGRRQILESHMSKVLKSDDVDLMIIARGTPGFSGADLANLVNVAALKAAMDGAKAVTMNDLEYAKDRIMMGSERKSAVISDESRKLTAYHEGGHALVAIHTEGAHPVHKATIVPRGMALGMVAQLPDKDETSVSRKQMLARLDVCMGGRVAEELIFGDSEVTSGASSDFQQATAVARAMVTKYGMSKQLGFVSYNYEDDGKSMSTETRLLIEKEVKCFVENAYNNAKNILIKHNKELHALANALLEHETLTGAQIKNILAQVNNKQQQEHAIEAPQKTPAVPSSPAASAAAAAAAAAAAAQQAAAKAKGEIAGIGS</sequence>
<comment type="function">
    <text evidence="1">Probable ATP-dependent zinc metallopeptidase.</text>
</comment>
<comment type="cofactor">
    <cofactor evidence="1">
        <name>Zn(2+)</name>
        <dbReference type="ChEBI" id="CHEBI:29105"/>
    </cofactor>
    <text evidence="1">Binds 1 zinc ion per subunit.</text>
</comment>
<comment type="subcellular location">
    <subcellularLocation>
        <location evidence="1">Mitochondrion</location>
    </subcellularLocation>
</comment>
<comment type="similarity">
    <text evidence="4">In the N-terminal section; belongs to the AAA ATPase family.</text>
</comment>
<comment type="similarity">
    <text evidence="4">In the C-terminal section; belongs to the peptidase M41 family.</text>
</comment>
<comment type="sequence caution" evidence="4">
    <conflict type="erroneous gene model prediction">
        <sequence resource="EMBL-CDS" id="BAD45191"/>
    </conflict>
</comment>
<feature type="transit peptide" description="Mitochondrion" evidence="2">
    <location>
        <begin position="1"/>
        <end position="18"/>
    </location>
</feature>
<feature type="chain" id="PRO_0000341341" description="ATP-dependent zinc metalloprotease FTSH 5, mitochondrial">
    <location>
        <begin position="19"/>
        <end position="715"/>
    </location>
</feature>
<feature type="region of interest" description="Disordered" evidence="3">
    <location>
        <begin position="665"/>
        <end position="685"/>
    </location>
</feature>
<feature type="active site" evidence="1">
    <location>
        <position position="490"/>
    </location>
</feature>
<feature type="binding site" evidence="2">
    <location>
        <begin position="270"/>
        <end position="277"/>
    </location>
    <ligand>
        <name>ATP</name>
        <dbReference type="ChEBI" id="CHEBI:30616"/>
    </ligand>
</feature>
<feature type="binding site" evidence="1">
    <location>
        <position position="489"/>
    </location>
    <ligand>
        <name>Zn(2+)</name>
        <dbReference type="ChEBI" id="CHEBI:29105"/>
        <note>catalytic</note>
    </ligand>
</feature>
<feature type="binding site" evidence="1">
    <location>
        <position position="493"/>
    </location>
    <ligand>
        <name>Zn(2+)</name>
        <dbReference type="ChEBI" id="CHEBI:29105"/>
        <note>catalytic</note>
    </ligand>
</feature>
<feature type="binding site" evidence="1">
    <location>
        <position position="567"/>
    </location>
    <ligand>
        <name>Zn(2+)</name>
        <dbReference type="ChEBI" id="CHEBI:29105"/>
        <note>catalytic</note>
    </ligand>
</feature>
<name>FTSH5_ORYSJ</name>
<reference key="1">
    <citation type="journal article" date="2002" name="Nature">
        <title>The genome sequence and structure of rice chromosome 1.</title>
        <authorList>
            <person name="Sasaki T."/>
            <person name="Matsumoto T."/>
            <person name="Yamamoto K."/>
            <person name="Sakata K."/>
            <person name="Baba T."/>
            <person name="Katayose Y."/>
            <person name="Wu J."/>
            <person name="Niimura Y."/>
            <person name="Cheng Z."/>
            <person name="Nagamura Y."/>
            <person name="Antonio B.A."/>
            <person name="Kanamori H."/>
            <person name="Hosokawa S."/>
            <person name="Masukawa M."/>
            <person name="Arikawa K."/>
            <person name="Chiden Y."/>
            <person name="Hayashi M."/>
            <person name="Okamoto M."/>
            <person name="Ando T."/>
            <person name="Aoki H."/>
            <person name="Arita K."/>
            <person name="Hamada M."/>
            <person name="Harada C."/>
            <person name="Hijishita S."/>
            <person name="Honda M."/>
            <person name="Ichikawa Y."/>
            <person name="Idonuma A."/>
            <person name="Iijima M."/>
            <person name="Ikeda M."/>
            <person name="Ikeno M."/>
            <person name="Ito S."/>
            <person name="Ito T."/>
            <person name="Ito Y."/>
            <person name="Ito Y."/>
            <person name="Iwabuchi A."/>
            <person name="Kamiya K."/>
            <person name="Karasawa W."/>
            <person name="Katagiri S."/>
            <person name="Kikuta A."/>
            <person name="Kobayashi N."/>
            <person name="Kono I."/>
            <person name="Machita K."/>
            <person name="Maehara T."/>
            <person name="Mizuno H."/>
            <person name="Mizubayashi T."/>
            <person name="Mukai Y."/>
            <person name="Nagasaki H."/>
            <person name="Nakashima M."/>
            <person name="Nakama Y."/>
            <person name="Nakamichi Y."/>
            <person name="Nakamura M."/>
            <person name="Namiki N."/>
            <person name="Negishi M."/>
            <person name="Ohta I."/>
            <person name="Ono N."/>
            <person name="Saji S."/>
            <person name="Sakai K."/>
            <person name="Shibata M."/>
            <person name="Shimokawa T."/>
            <person name="Shomura A."/>
            <person name="Song J."/>
            <person name="Takazaki Y."/>
            <person name="Terasawa K."/>
            <person name="Tsuji K."/>
            <person name="Waki K."/>
            <person name="Yamagata H."/>
            <person name="Yamane H."/>
            <person name="Yoshiki S."/>
            <person name="Yoshihara R."/>
            <person name="Yukawa K."/>
            <person name="Zhong H."/>
            <person name="Iwama H."/>
            <person name="Endo T."/>
            <person name="Ito H."/>
            <person name="Hahn J.H."/>
            <person name="Kim H.-I."/>
            <person name="Eun M.-Y."/>
            <person name="Yano M."/>
            <person name="Jiang J."/>
            <person name="Gojobori T."/>
        </authorList>
    </citation>
    <scope>NUCLEOTIDE SEQUENCE [LARGE SCALE GENOMIC DNA]</scope>
    <source>
        <strain>cv. Nipponbare</strain>
    </source>
</reference>
<reference key="2">
    <citation type="journal article" date="2005" name="Nature">
        <title>The map-based sequence of the rice genome.</title>
        <authorList>
            <consortium name="International rice genome sequencing project (IRGSP)"/>
        </authorList>
    </citation>
    <scope>NUCLEOTIDE SEQUENCE [LARGE SCALE GENOMIC DNA]</scope>
    <source>
        <strain>cv. Nipponbare</strain>
    </source>
</reference>
<reference key="3">
    <citation type="journal article" date="2008" name="Nucleic Acids Res.">
        <title>The rice annotation project database (RAP-DB): 2008 update.</title>
        <authorList>
            <consortium name="The rice annotation project (RAP)"/>
        </authorList>
    </citation>
    <scope>GENOME REANNOTATION</scope>
    <source>
        <strain>cv. Nipponbare</strain>
    </source>
</reference>
<reference key="4">
    <citation type="journal article" date="2013" name="Rice">
        <title>Improvement of the Oryza sativa Nipponbare reference genome using next generation sequence and optical map data.</title>
        <authorList>
            <person name="Kawahara Y."/>
            <person name="de la Bastide M."/>
            <person name="Hamilton J.P."/>
            <person name="Kanamori H."/>
            <person name="McCombie W.R."/>
            <person name="Ouyang S."/>
            <person name="Schwartz D.C."/>
            <person name="Tanaka T."/>
            <person name="Wu J."/>
            <person name="Zhou S."/>
            <person name="Childs K.L."/>
            <person name="Davidson R.M."/>
            <person name="Lin H."/>
            <person name="Quesada-Ocampo L."/>
            <person name="Vaillancourt B."/>
            <person name="Sakai H."/>
            <person name="Lee S.S."/>
            <person name="Kim J."/>
            <person name="Numa H."/>
            <person name="Itoh T."/>
            <person name="Buell C.R."/>
            <person name="Matsumoto T."/>
        </authorList>
    </citation>
    <scope>GENOME REANNOTATION</scope>
    <source>
        <strain>cv. Nipponbare</strain>
    </source>
</reference>
<reference key="5">
    <citation type="journal article" date="2005" name="PLoS Biol.">
        <title>The genomes of Oryza sativa: a history of duplications.</title>
        <authorList>
            <person name="Yu J."/>
            <person name="Wang J."/>
            <person name="Lin W."/>
            <person name="Li S."/>
            <person name="Li H."/>
            <person name="Zhou J."/>
            <person name="Ni P."/>
            <person name="Dong W."/>
            <person name="Hu S."/>
            <person name="Zeng C."/>
            <person name="Zhang J."/>
            <person name="Zhang Y."/>
            <person name="Li R."/>
            <person name="Xu Z."/>
            <person name="Li S."/>
            <person name="Li X."/>
            <person name="Zheng H."/>
            <person name="Cong L."/>
            <person name="Lin L."/>
            <person name="Yin J."/>
            <person name="Geng J."/>
            <person name="Li G."/>
            <person name="Shi J."/>
            <person name="Liu J."/>
            <person name="Lv H."/>
            <person name="Li J."/>
            <person name="Wang J."/>
            <person name="Deng Y."/>
            <person name="Ran L."/>
            <person name="Shi X."/>
            <person name="Wang X."/>
            <person name="Wu Q."/>
            <person name="Li C."/>
            <person name="Ren X."/>
            <person name="Wang J."/>
            <person name="Wang X."/>
            <person name="Li D."/>
            <person name="Liu D."/>
            <person name="Zhang X."/>
            <person name="Ji Z."/>
            <person name="Zhao W."/>
            <person name="Sun Y."/>
            <person name="Zhang Z."/>
            <person name="Bao J."/>
            <person name="Han Y."/>
            <person name="Dong L."/>
            <person name="Ji J."/>
            <person name="Chen P."/>
            <person name="Wu S."/>
            <person name="Liu J."/>
            <person name="Xiao Y."/>
            <person name="Bu D."/>
            <person name="Tan J."/>
            <person name="Yang L."/>
            <person name="Ye C."/>
            <person name="Zhang J."/>
            <person name="Xu J."/>
            <person name="Zhou Y."/>
            <person name="Yu Y."/>
            <person name="Zhang B."/>
            <person name="Zhuang S."/>
            <person name="Wei H."/>
            <person name="Liu B."/>
            <person name="Lei M."/>
            <person name="Yu H."/>
            <person name="Li Y."/>
            <person name="Xu H."/>
            <person name="Wei S."/>
            <person name="He X."/>
            <person name="Fang L."/>
            <person name="Zhang Z."/>
            <person name="Zhang Y."/>
            <person name="Huang X."/>
            <person name="Su Z."/>
            <person name="Tong W."/>
            <person name="Li J."/>
            <person name="Tong Z."/>
            <person name="Li S."/>
            <person name="Ye J."/>
            <person name="Wang L."/>
            <person name="Fang L."/>
            <person name="Lei T."/>
            <person name="Chen C.-S."/>
            <person name="Chen H.-C."/>
            <person name="Xu Z."/>
            <person name="Li H."/>
            <person name="Huang H."/>
            <person name="Zhang F."/>
            <person name="Xu H."/>
            <person name="Li N."/>
            <person name="Zhao C."/>
            <person name="Li S."/>
            <person name="Dong L."/>
            <person name="Huang Y."/>
            <person name="Li L."/>
            <person name="Xi Y."/>
            <person name="Qi Q."/>
            <person name="Li W."/>
            <person name="Zhang B."/>
            <person name="Hu W."/>
            <person name="Zhang Y."/>
            <person name="Tian X."/>
            <person name="Jiao Y."/>
            <person name="Liang X."/>
            <person name="Jin J."/>
            <person name="Gao L."/>
            <person name="Zheng W."/>
            <person name="Hao B."/>
            <person name="Liu S.-M."/>
            <person name="Wang W."/>
            <person name="Yuan L."/>
            <person name="Cao M."/>
            <person name="McDermott J."/>
            <person name="Samudrala R."/>
            <person name="Wang J."/>
            <person name="Wong G.K.-S."/>
            <person name="Yang H."/>
        </authorList>
    </citation>
    <scope>NUCLEOTIDE SEQUENCE [LARGE SCALE GENOMIC DNA]</scope>
    <source>
        <strain>cv. Nipponbare</strain>
    </source>
</reference>
<reference key="6">
    <citation type="journal article" date="2005" name="Plant Physiol.">
        <title>Functional redundancy of AtFtsH metalloproteases in thylakoid membrane complexes.</title>
        <authorList>
            <person name="Yu F."/>
            <person name="Park S."/>
            <person name="Rodermel S.R."/>
        </authorList>
    </citation>
    <scope>GENE FAMILY</scope>
    <scope>NOMENCLATURE</scope>
</reference>
<organism>
    <name type="scientific">Oryza sativa subsp. japonica</name>
    <name type="common">Rice</name>
    <dbReference type="NCBI Taxonomy" id="39947"/>
    <lineage>
        <taxon>Eukaryota</taxon>
        <taxon>Viridiplantae</taxon>
        <taxon>Streptophyta</taxon>
        <taxon>Embryophyta</taxon>
        <taxon>Tracheophyta</taxon>
        <taxon>Spermatophyta</taxon>
        <taxon>Magnoliopsida</taxon>
        <taxon>Liliopsida</taxon>
        <taxon>Poales</taxon>
        <taxon>Poaceae</taxon>
        <taxon>BOP clade</taxon>
        <taxon>Oryzoideae</taxon>
        <taxon>Oryzeae</taxon>
        <taxon>Oryzinae</taxon>
        <taxon>Oryza</taxon>
        <taxon>Oryza sativa</taxon>
    </lineage>
</organism>
<gene>
    <name type="primary">FTSH5</name>
    <name type="ordered locus">Os01g0574500</name>
    <name type="ordered locus">LOC_Os01g39260</name>
    <name type="ORF">B1151A10.26-1</name>
    <name type="ORF">OsJ_002241</name>
</gene>
<accession>Q8LQJ8</accession>
<accession>A0A0P0V4C9</accession>
<accession>Q656T6</accession>
<proteinExistence type="inferred from homology"/>
<protein>
    <recommendedName>
        <fullName>ATP-dependent zinc metalloprotease FTSH 5, mitochondrial</fullName>
        <shortName>OsFTSH5</shortName>
        <ecNumber>3.4.24.-</ecNumber>
    </recommendedName>
</protein>
<keyword id="KW-0067">ATP-binding</keyword>
<keyword id="KW-0378">Hydrolase</keyword>
<keyword id="KW-0479">Metal-binding</keyword>
<keyword id="KW-0482">Metalloprotease</keyword>
<keyword id="KW-0496">Mitochondrion</keyword>
<keyword id="KW-0547">Nucleotide-binding</keyword>
<keyword id="KW-0645">Protease</keyword>
<keyword id="KW-1185">Reference proteome</keyword>
<keyword id="KW-0809">Transit peptide</keyword>
<keyword id="KW-0862">Zinc</keyword>
<evidence type="ECO:0000250" key="1"/>
<evidence type="ECO:0000255" key="2"/>
<evidence type="ECO:0000256" key="3">
    <source>
        <dbReference type="SAM" id="MobiDB-lite"/>
    </source>
</evidence>
<evidence type="ECO:0000305" key="4"/>
<dbReference type="EC" id="3.4.24.-"/>
<dbReference type="EMBL" id="AP003413">
    <property type="protein sequence ID" value="BAB91903.1"/>
    <property type="molecule type" value="Genomic_DNA"/>
</dbReference>
<dbReference type="EMBL" id="AP003413">
    <property type="protein sequence ID" value="BAD45191.1"/>
    <property type="status" value="ALT_SEQ"/>
    <property type="molecule type" value="Genomic_DNA"/>
</dbReference>
<dbReference type="EMBL" id="AP008207">
    <property type="protein sequence ID" value="BAF05299.1"/>
    <property type="molecule type" value="Genomic_DNA"/>
</dbReference>
<dbReference type="EMBL" id="AP014957">
    <property type="protein sequence ID" value="BAS72813.1"/>
    <property type="molecule type" value="Genomic_DNA"/>
</dbReference>
<dbReference type="EMBL" id="CM000138">
    <property type="protein sequence ID" value="EAZ12416.1"/>
    <property type="molecule type" value="Genomic_DNA"/>
</dbReference>
<dbReference type="RefSeq" id="XP_015615459.1">
    <property type="nucleotide sequence ID" value="XM_015759973.1"/>
</dbReference>
<dbReference type="SMR" id="Q8LQJ8"/>
<dbReference type="FunCoup" id="Q8LQJ8">
    <property type="interactions" value="3020"/>
</dbReference>
<dbReference type="STRING" id="39947.Q8LQJ8"/>
<dbReference type="MEROPS" id="M41.018"/>
<dbReference type="PaxDb" id="39947-Q8LQJ8"/>
<dbReference type="EnsemblPlants" id="Os01t0574500-01">
    <property type="protein sequence ID" value="Os01t0574500-01"/>
    <property type="gene ID" value="Os01g0574500"/>
</dbReference>
<dbReference type="Gramene" id="Os01t0574500-01">
    <property type="protein sequence ID" value="Os01t0574500-01"/>
    <property type="gene ID" value="Os01g0574500"/>
</dbReference>
<dbReference type="KEGG" id="dosa:Os01g0574500"/>
<dbReference type="eggNOG" id="KOG0734">
    <property type="taxonomic scope" value="Eukaryota"/>
</dbReference>
<dbReference type="HOGENOM" id="CLU_000688_9_3_1"/>
<dbReference type="InParanoid" id="Q8LQJ8"/>
<dbReference type="OMA" id="KYDSDPM"/>
<dbReference type="OrthoDB" id="1413014at2759"/>
<dbReference type="Proteomes" id="UP000000763">
    <property type="component" value="Chromosome 1"/>
</dbReference>
<dbReference type="Proteomes" id="UP000007752">
    <property type="component" value="Chromosome 1"/>
</dbReference>
<dbReference type="Proteomes" id="UP000059680">
    <property type="component" value="Chromosome 1"/>
</dbReference>
<dbReference type="ExpressionAtlas" id="Q8LQJ8">
    <property type="expression patterns" value="baseline and differential"/>
</dbReference>
<dbReference type="GO" id="GO:0009507">
    <property type="term" value="C:chloroplast"/>
    <property type="evidence" value="ECO:0000318"/>
    <property type="project" value="GO_Central"/>
</dbReference>
<dbReference type="GO" id="GO:0016020">
    <property type="term" value="C:membrane"/>
    <property type="evidence" value="ECO:0007669"/>
    <property type="project" value="InterPro"/>
</dbReference>
<dbReference type="GO" id="GO:0005739">
    <property type="term" value="C:mitochondrion"/>
    <property type="evidence" value="ECO:0007669"/>
    <property type="project" value="UniProtKB-SubCell"/>
</dbReference>
<dbReference type="GO" id="GO:0005524">
    <property type="term" value="F:ATP binding"/>
    <property type="evidence" value="ECO:0007669"/>
    <property type="project" value="UniProtKB-KW"/>
</dbReference>
<dbReference type="GO" id="GO:0016887">
    <property type="term" value="F:ATP hydrolysis activity"/>
    <property type="evidence" value="ECO:0007669"/>
    <property type="project" value="InterPro"/>
</dbReference>
<dbReference type="GO" id="GO:0004176">
    <property type="term" value="F:ATP-dependent peptidase activity"/>
    <property type="evidence" value="ECO:0000318"/>
    <property type="project" value="GO_Central"/>
</dbReference>
<dbReference type="GO" id="GO:0046872">
    <property type="term" value="F:metal ion binding"/>
    <property type="evidence" value="ECO:0007669"/>
    <property type="project" value="UniProtKB-KW"/>
</dbReference>
<dbReference type="GO" id="GO:0004222">
    <property type="term" value="F:metalloendopeptidase activity"/>
    <property type="evidence" value="ECO:0007669"/>
    <property type="project" value="InterPro"/>
</dbReference>
<dbReference type="GO" id="GO:0045037">
    <property type="term" value="P:protein import into chloroplast stroma"/>
    <property type="evidence" value="ECO:0000318"/>
    <property type="project" value="GO_Central"/>
</dbReference>
<dbReference type="GO" id="GO:0006508">
    <property type="term" value="P:proteolysis"/>
    <property type="evidence" value="ECO:0000318"/>
    <property type="project" value="GO_Central"/>
</dbReference>
<dbReference type="CDD" id="cd19501">
    <property type="entry name" value="RecA-like_FtsH"/>
    <property type="match status" value="1"/>
</dbReference>
<dbReference type="FunFam" id="1.10.8.60:FF:000001">
    <property type="entry name" value="ATP-dependent zinc metalloprotease FtsH"/>
    <property type="match status" value="1"/>
</dbReference>
<dbReference type="FunFam" id="1.20.58.760:FF:000002">
    <property type="entry name" value="ATP-dependent zinc metalloprotease FtsH"/>
    <property type="match status" value="1"/>
</dbReference>
<dbReference type="FunFam" id="3.40.50.300:FF:000175">
    <property type="entry name" value="ATP-dependent zinc metalloprotease FTSH 4"/>
    <property type="match status" value="1"/>
</dbReference>
<dbReference type="Gene3D" id="1.10.8.60">
    <property type="match status" value="1"/>
</dbReference>
<dbReference type="Gene3D" id="3.40.50.300">
    <property type="entry name" value="P-loop containing nucleotide triphosphate hydrolases"/>
    <property type="match status" value="1"/>
</dbReference>
<dbReference type="Gene3D" id="1.20.58.760">
    <property type="entry name" value="Peptidase M41"/>
    <property type="match status" value="1"/>
</dbReference>
<dbReference type="HAMAP" id="MF_01458">
    <property type="entry name" value="FtsH"/>
    <property type="match status" value="1"/>
</dbReference>
<dbReference type="InterPro" id="IPR003593">
    <property type="entry name" value="AAA+_ATPase"/>
</dbReference>
<dbReference type="InterPro" id="IPR041569">
    <property type="entry name" value="AAA_lid_3"/>
</dbReference>
<dbReference type="InterPro" id="IPR003959">
    <property type="entry name" value="ATPase_AAA_core"/>
</dbReference>
<dbReference type="InterPro" id="IPR003960">
    <property type="entry name" value="ATPase_AAA_CS"/>
</dbReference>
<dbReference type="InterPro" id="IPR005936">
    <property type="entry name" value="FtsH"/>
</dbReference>
<dbReference type="InterPro" id="IPR027417">
    <property type="entry name" value="P-loop_NTPase"/>
</dbReference>
<dbReference type="InterPro" id="IPR000642">
    <property type="entry name" value="Peptidase_M41"/>
</dbReference>
<dbReference type="InterPro" id="IPR037219">
    <property type="entry name" value="Peptidase_M41-like"/>
</dbReference>
<dbReference type="NCBIfam" id="TIGR01241">
    <property type="entry name" value="FtsH_fam"/>
    <property type="match status" value="1"/>
</dbReference>
<dbReference type="PANTHER" id="PTHR23076:SF37">
    <property type="entry name" value="ATP-DEPENDENT ZINC METALLOPROTEASE FTSH 4, MITOCHONDRIAL"/>
    <property type="match status" value="1"/>
</dbReference>
<dbReference type="PANTHER" id="PTHR23076">
    <property type="entry name" value="METALLOPROTEASE M41 FTSH"/>
    <property type="match status" value="1"/>
</dbReference>
<dbReference type="Pfam" id="PF00004">
    <property type="entry name" value="AAA"/>
    <property type="match status" value="1"/>
</dbReference>
<dbReference type="Pfam" id="PF17862">
    <property type="entry name" value="AAA_lid_3"/>
    <property type="match status" value="1"/>
</dbReference>
<dbReference type="Pfam" id="PF01434">
    <property type="entry name" value="Peptidase_M41"/>
    <property type="match status" value="1"/>
</dbReference>
<dbReference type="SMART" id="SM00382">
    <property type="entry name" value="AAA"/>
    <property type="match status" value="1"/>
</dbReference>
<dbReference type="SUPFAM" id="SSF140990">
    <property type="entry name" value="FtsH protease domain-like"/>
    <property type="match status" value="1"/>
</dbReference>
<dbReference type="SUPFAM" id="SSF52540">
    <property type="entry name" value="P-loop containing nucleoside triphosphate hydrolases"/>
    <property type="match status" value="1"/>
</dbReference>
<dbReference type="PROSITE" id="PS00674">
    <property type="entry name" value="AAA"/>
    <property type="match status" value="1"/>
</dbReference>